<dbReference type="EMBL" id="DQ133567">
    <property type="protein sequence ID" value="AAZ73481.1"/>
    <property type="molecule type" value="mRNA"/>
</dbReference>
<dbReference type="SMR" id="Q2QCI8"/>
<dbReference type="FunCoup" id="Q2QCI8">
    <property type="interactions" value="1741"/>
</dbReference>
<dbReference type="STRING" id="7955.ENSDARP00000130194"/>
<dbReference type="PaxDb" id="7955-ENSDARP00000124576"/>
<dbReference type="AGR" id="ZFIN:ZDB-GENE-060125-1"/>
<dbReference type="ZFIN" id="ZDB-GENE-060125-1">
    <property type="gene designation" value="med12"/>
</dbReference>
<dbReference type="eggNOG" id="KOG3598">
    <property type="taxonomic scope" value="Eukaryota"/>
</dbReference>
<dbReference type="InParanoid" id="Q2QCI8"/>
<dbReference type="PhylomeDB" id="Q2QCI8"/>
<dbReference type="PRO" id="PR:Q2QCI8"/>
<dbReference type="Proteomes" id="UP000000437">
    <property type="component" value="Unplaced"/>
</dbReference>
<dbReference type="GO" id="GO:0016592">
    <property type="term" value="C:mediator complex"/>
    <property type="evidence" value="ECO:0000318"/>
    <property type="project" value="GO_Central"/>
</dbReference>
<dbReference type="GO" id="GO:0008013">
    <property type="term" value="F:beta-catenin binding"/>
    <property type="evidence" value="ECO:0007669"/>
    <property type="project" value="InterPro"/>
</dbReference>
<dbReference type="GO" id="GO:0140587">
    <property type="term" value="F:chromatin loop anchoring activity"/>
    <property type="evidence" value="ECO:0000315"/>
    <property type="project" value="ZFIN"/>
</dbReference>
<dbReference type="GO" id="GO:0003700">
    <property type="term" value="F:DNA-binding transcription factor activity"/>
    <property type="evidence" value="ECO:0000316"/>
    <property type="project" value="ZFIN"/>
</dbReference>
<dbReference type="GO" id="GO:0140585">
    <property type="term" value="F:promoter-enhancer loop anchoring activity"/>
    <property type="evidence" value="ECO:0000315"/>
    <property type="project" value="ZFIN"/>
</dbReference>
<dbReference type="GO" id="GO:0003713">
    <property type="term" value="F:transcription coactivator activity"/>
    <property type="evidence" value="ECO:0000318"/>
    <property type="project" value="GO_Central"/>
</dbReference>
<dbReference type="GO" id="GO:0021954">
    <property type="term" value="P:central nervous system neuron development"/>
    <property type="evidence" value="ECO:0000315"/>
    <property type="project" value="ZFIN"/>
</dbReference>
<dbReference type="GO" id="GO:0043583">
    <property type="term" value="P:ear development"/>
    <property type="evidence" value="ECO:0000315"/>
    <property type="project" value="ZFIN"/>
</dbReference>
<dbReference type="GO" id="GO:0048702">
    <property type="term" value="P:embryonic neurocranium morphogenesis"/>
    <property type="evidence" value="ECO:0000315"/>
    <property type="project" value="ZFIN"/>
</dbReference>
<dbReference type="GO" id="GO:0035118">
    <property type="term" value="P:embryonic pectoral fin morphogenesis"/>
    <property type="evidence" value="ECO:0000315"/>
    <property type="project" value="ZFIN"/>
</dbReference>
<dbReference type="GO" id="GO:0048703">
    <property type="term" value="P:embryonic viscerocranium morphogenesis"/>
    <property type="evidence" value="ECO:0000315"/>
    <property type="project" value="ZFIN"/>
</dbReference>
<dbReference type="GO" id="GO:0007492">
    <property type="term" value="P:endoderm development"/>
    <property type="evidence" value="ECO:0000315"/>
    <property type="project" value="ZFIN"/>
</dbReference>
<dbReference type="GO" id="GO:0030900">
    <property type="term" value="P:forebrain development"/>
    <property type="evidence" value="ECO:0000315"/>
    <property type="project" value="ZFIN"/>
</dbReference>
<dbReference type="GO" id="GO:0021986">
    <property type="term" value="P:habenula development"/>
    <property type="evidence" value="ECO:0000315"/>
    <property type="project" value="ZFIN"/>
</dbReference>
<dbReference type="GO" id="GO:0007507">
    <property type="term" value="P:heart development"/>
    <property type="evidence" value="ECO:0000315"/>
    <property type="project" value="ZFIN"/>
</dbReference>
<dbReference type="GO" id="GO:0050935">
    <property type="term" value="P:iridophore differentiation"/>
    <property type="evidence" value="ECO:0000315"/>
    <property type="project" value="ZFIN"/>
</dbReference>
<dbReference type="GO" id="GO:0001822">
    <property type="term" value="P:kidney development"/>
    <property type="evidence" value="ECO:0000315"/>
    <property type="project" value="ZFIN"/>
</dbReference>
<dbReference type="GO" id="GO:0030901">
    <property type="term" value="P:midbrain development"/>
    <property type="evidence" value="ECO:0000315"/>
    <property type="project" value="ZFIN"/>
</dbReference>
<dbReference type="GO" id="GO:0014032">
    <property type="term" value="P:neural crest cell development"/>
    <property type="evidence" value="ECO:0000315"/>
    <property type="project" value="ZFIN"/>
</dbReference>
<dbReference type="GO" id="GO:0030182">
    <property type="term" value="P:neuron differentiation"/>
    <property type="evidence" value="ECO:0000315"/>
    <property type="project" value="ZFIN"/>
</dbReference>
<dbReference type="GO" id="GO:0021982">
    <property type="term" value="P:pineal gland development"/>
    <property type="evidence" value="ECO:0000315"/>
    <property type="project" value="ZFIN"/>
</dbReference>
<dbReference type="GO" id="GO:0045893">
    <property type="term" value="P:positive regulation of DNA-templated transcription"/>
    <property type="evidence" value="ECO:0000316"/>
    <property type="project" value="ZFIN"/>
</dbReference>
<dbReference type="GO" id="GO:0045944">
    <property type="term" value="P:positive regulation of transcription by RNA polymerase II"/>
    <property type="evidence" value="ECO:0000318"/>
    <property type="project" value="GO_Central"/>
</dbReference>
<dbReference type="GO" id="GO:0002761">
    <property type="term" value="P:regulation of myeloid leukocyte differentiation"/>
    <property type="evidence" value="ECO:0000315"/>
    <property type="project" value="ZFIN"/>
</dbReference>
<dbReference type="GO" id="GO:0021654">
    <property type="term" value="P:rhombomere boundary formation"/>
    <property type="evidence" value="ECO:0000315"/>
    <property type="project" value="ZFIN"/>
</dbReference>
<dbReference type="GO" id="GO:0021591">
    <property type="term" value="P:ventricular system development"/>
    <property type="evidence" value="ECO:0000315"/>
    <property type="project" value="ZFIN"/>
</dbReference>
<dbReference type="InterPro" id="IPR051647">
    <property type="entry name" value="Mediator_comp_sub12"/>
</dbReference>
<dbReference type="InterPro" id="IPR019035">
    <property type="entry name" value="Mediator_Med12"/>
</dbReference>
<dbReference type="InterPro" id="IPR021989">
    <property type="entry name" value="Mediator_Med12_catenin-bd"/>
</dbReference>
<dbReference type="InterPro" id="IPR021990">
    <property type="entry name" value="Mediator_Med12_LCEWAV"/>
</dbReference>
<dbReference type="PANTHER" id="PTHR46007">
    <property type="entry name" value="MEDIATOR OF RNA POLYMERASE II TRANSCRIPTION SUBUNIT 12"/>
    <property type="match status" value="1"/>
</dbReference>
<dbReference type="PANTHER" id="PTHR46007:SF11">
    <property type="entry name" value="MEDIATOR OF RNA POLYMERASE II TRANSCRIPTION SUBUNIT 12"/>
    <property type="match status" value="1"/>
</dbReference>
<dbReference type="Pfam" id="PF09497">
    <property type="entry name" value="Med12"/>
    <property type="match status" value="1"/>
</dbReference>
<dbReference type="Pfam" id="PF12145">
    <property type="entry name" value="Med12-LCEWAV"/>
    <property type="match status" value="1"/>
</dbReference>
<dbReference type="Pfam" id="PF12144">
    <property type="entry name" value="Med12-PQL"/>
    <property type="match status" value="1"/>
</dbReference>
<dbReference type="SMART" id="SM01281">
    <property type="entry name" value="Med12"/>
    <property type="match status" value="1"/>
</dbReference>
<feature type="chain" id="PRO_0000312960" description="Mediator of RNA polymerase II transcription subunit 12">
    <location>
        <begin position="1"/>
        <end position="2173"/>
    </location>
</feature>
<feature type="region of interest" description="Disordered" evidence="2">
    <location>
        <begin position="1"/>
        <end position="34"/>
    </location>
</feature>
<feature type="region of interest" description="Disordered" evidence="2">
    <location>
        <begin position="318"/>
        <end position="345"/>
    </location>
</feature>
<feature type="region of interest" description="Disordered" evidence="2">
    <location>
        <begin position="630"/>
        <end position="718"/>
    </location>
</feature>
<feature type="region of interest" description="Disordered" evidence="2">
    <location>
        <begin position="784"/>
        <end position="804"/>
    </location>
</feature>
<feature type="region of interest" description="Disordered" evidence="2">
    <location>
        <begin position="1380"/>
        <end position="1404"/>
    </location>
</feature>
<feature type="region of interest" description="Disordered" evidence="2">
    <location>
        <begin position="1443"/>
        <end position="1467"/>
    </location>
</feature>
<feature type="region of interest" description="Disordered" evidence="2">
    <location>
        <begin position="1737"/>
        <end position="1780"/>
    </location>
</feature>
<feature type="region of interest" description="Disordered" evidence="2">
    <location>
        <begin position="2020"/>
        <end position="2068"/>
    </location>
</feature>
<feature type="compositionally biased region" description="Basic and acidic residues" evidence="2">
    <location>
        <begin position="702"/>
        <end position="717"/>
    </location>
</feature>
<feature type="compositionally biased region" description="Low complexity" evidence="2">
    <location>
        <begin position="1389"/>
        <end position="1404"/>
    </location>
</feature>
<feature type="compositionally biased region" description="Basic and acidic residues" evidence="2">
    <location>
        <begin position="1443"/>
        <end position="1462"/>
    </location>
</feature>
<feature type="compositionally biased region" description="Basic and acidic residues" evidence="2">
    <location>
        <begin position="1747"/>
        <end position="1759"/>
    </location>
</feature>
<feature type="compositionally biased region" description="Low complexity" evidence="2">
    <location>
        <begin position="2034"/>
        <end position="2057"/>
    </location>
</feature>
<accession>Q2QCI8</accession>
<proteinExistence type="evidence at transcript level"/>
<evidence type="ECO:0000250" key="1"/>
<evidence type="ECO:0000256" key="2">
    <source>
        <dbReference type="SAM" id="MobiDB-lite"/>
    </source>
</evidence>
<evidence type="ECO:0000269" key="3">
    <source>
    </source>
</evidence>
<evidence type="ECO:0000269" key="4">
    <source>
    </source>
</evidence>
<evidence type="ECO:0000269" key="5">
    <source>
    </source>
</evidence>
<evidence type="ECO:0000305" key="6"/>
<protein>
    <recommendedName>
        <fullName>Mediator of RNA polymerase II transcription subunit 12</fullName>
    </recommendedName>
    <alternativeName>
        <fullName>Mediator complex subunit 12</fullName>
    </alternativeName>
    <alternativeName>
        <fullName>Protein kohtalo</fullName>
    </alternativeName>
    <alternativeName>
        <fullName>Protein motionless</fullName>
    </alternativeName>
    <alternativeName>
        <fullName>Thyroid hormone receptor-associated protein complex 230 kDa component</fullName>
        <shortName>Trap230</shortName>
    </alternativeName>
</protein>
<keyword id="KW-0010">Activator</keyword>
<keyword id="KW-0217">Developmental protein</keyword>
<keyword id="KW-0539">Nucleus</keyword>
<keyword id="KW-1185">Reference proteome</keyword>
<keyword id="KW-0678">Repressor</keyword>
<keyword id="KW-0804">Transcription</keyword>
<keyword id="KW-0805">Transcription regulation</keyword>
<gene>
    <name type="primary">med12</name>
    <name type="synonym">kto</name>
    <name type="synonym">mot</name>
    <name type="synonym">trap230</name>
</gene>
<reference key="1">
    <citation type="journal article" date="2005" name="Proc. Natl. Acad. Sci. U.S.A.">
        <title>The zebrafish kohtalo/trap230 gene is required for the development of the brain, neural crest, and pronephric kidney.</title>
        <authorList>
            <person name="Hong S.-K."/>
            <person name="Haldin C.E."/>
            <person name="Lawson N.D."/>
            <person name="Weinstein B.M."/>
            <person name="Dawid I.B."/>
            <person name="Hukriede N.A."/>
        </authorList>
    </citation>
    <scope>NUCLEOTIDE SEQUENCE [MRNA]</scope>
    <scope>FUNCTION</scope>
    <scope>DEVELOPMENTAL STAGE</scope>
</reference>
<reference key="2">
    <citation type="journal article" date="2006" name="Dev. Biol.">
        <title>Zebrafish Trap230/Med12 is required as a coactivator for Sox9-dependent neural crest, cartilage and ear development.</title>
        <authorList>
            <person name="Rau M.J."/>
            <person name="Fischer S."/>
            <person name="Neumann C.J."/>
        </authorList>
    </citation>
    <scope>FUNCTION</scope>
</reference>
<reference key="3">
    <citation type="journal article" date="2006" name="Proc. Natl. Acad. Sci. U.S.A.">
        <title>A subunit of the mediator complex regulates vertebrate neuronal development.</title>
        <authorList>
            <person name="Wang X."/>
            <person name="Yang N."/>
            <person name="Uno E."/>
            <person name="Roeder R.G."/>
            <person name="Guo S."/>
        </authorList>
    </citation>
    <scope>FUNCTION</scope>
    <scope>DEVELOPMENTAL STAGE</scope>
</reference>
<comment type="function">
    <text evidence="1 3 4 5">Component of the Mediator complex, a coactivator involved in regulated gene transcription of nearly all RNA polymerase II-dependent genes. Mediator functions as a bridge to convey information from gene-specific regulatory proteins to the basal RNA polymerase II transcription machinery. Mediator is recruited to promoters by direct interactions with regulatory proteins and serves as a scaffold for the assembly of a functional preinitiation complex with RNA polymerase II and the general transcription factors (By similarity). Required for development of the body axis, brain, ear, kidney, forelimb and neural crest and for pigmentation. Acts as a coactivator for sox9a and/or sox9b promoting the expression of several neuronal determination genes.</text>
</comment>
<comment type="subunit">
    <text evidence="1">Component of the Mediator complex.</text>
</comment>
<comment type="subcellular location">
    <subcellularLocation>
        <location evidence="6">Nucleus</location>
    </subcellularLocation>
</comment>
<comment type="developmental stage">
    <text evidence="3 5">Maternally expressed. Widely expressed in the early embryo and concentrated in the head by 48 hpf.</text>
</comment>
<comment type="similarity">
    <text evidence="6">Belongs to the Mediator complex subunit 12 family.</text>
</comment>
<name>MED12_DANRE</name>
<organism>
    <name type="scientific">Danio rerio</name>
    <name type="common">Zebrafish</name>
    <name type="synonym">Brachydanio rerio</name>
    <dbReference type="NCBI Taxonomy" id="7955"/>
    <lineage>
        <taxon>Eukaryota</taxon>
        <taxon>Metazoa</taxon>
        <taxon>Chordata</taxon>
        <taxon>Craniata</taxon>
        <taxon>Vertebrata</taxon>
        <taxon>Euteleostomi</taxon>
        <taxon>Actinopterygii</taxon>
        <taxon>Neopterygii</taxon>
        <taxon>Teleostei</taxon>
        <taxon>Ostariophysi</taxon>
        <taxon>Cypriniformes</taxon>
        <taxon>Danionidae</taxon>
        <taxon>Danioninae</taxon>
        <taxon>Danio</taxon>
    </lineage>
</organism>
<sequence length="2173" mass="243992">MAAFGVLSYEHRPLKRPRLGPPDVYPQDPKQKEDELTALNVKQGFNNQPAVSGDEHGSAKNVNFNSSKISSNFSSIIAEKLRCNTFPDTGKRKPQVNQKDNFWLVTARSQSSINNWFTDLAGTKPLTQLAKKVPIFSKKEEVFGYLAKYSVPVMRSAWMIKMTCAYHAAITENKMKKRHVIDPCIEWTPIITKYLWEQLQKVAEFYRQSPSQGCGSPLPAPPAEVETAMKQWEYNEKLAMFMFQDGMLDRHEFLTWVLECFEKIRPGEDELLRLLLPLLLQYSGEFVQSAYLSRRLAYFCTRRLNLLLSDGSIGPGPGGHQAHGISAQQGNALPPTPTSQPAGGNQPQTPFTDFYICPQHRPVVFGLSCMLQSIVLCCPSALVWHYSLTDSRNKTGSPLDLLPIAPSNLPMPGGNSTFNQQVRAKVREIEEQIKERGQAVEFRWSFDKCQETTAGFTISRVLHTLEVLDNHSFEKSDFSNSLDSLYNRIFGSGQSKDGHEMSPDDDAVVTLLCEWAVSCKRSGPHRAMVVAKLLEKRQTEIEAERCGESEVVDEKGSVSSGSLSAATLPVFQDVLLQFLDTQAPVLTEPGNESERVEFSNLVLLFYELIRHDVFSHNIYMCTLISRGDLASNSHLPRPRSPSDEPSDESERKDQDAGSSVKMEDTGMSESMEIDHNSSANFDEMFSPPMHCESKGSPSPEKQAQEQESKSTAKDKGMDPAFPLVYEQPRHIQYATHFPIPQEESASHECNQRLVVLYGVGKQRDEARHAIKKITKDILKVLNRKSTAETGGEEGQKRKRSKPEAFPTAEDIFSKFQHLSHFDQHQVTSQVSRNVLEQITSFALGMSYHLPLVQHIQFIFDLMEYSLNISGLIDFAIQLLNELSLVEAELLLKSSNLAGSYTTGLCLCIVAVLRRYHSCLILNPDQTAQVFDGLRIVVKSGVNPADCSSAERCILAYLYDLYTSCSHLKSKFGEIFSEFCSKVKNSIYYNIDPSDSNMLWDQMFMIDAITNPTAHNLNHSMLGKITNELNDSPANRYSFVCNVLMDVCVDHRDPERVNDIGILCAELTAYCRSLSAEWLGVLKALCCSSNNGNCGFNDLLCNVDVSDLSFHDSLATFVAILIARQCLLLEDLVRCVAIPSLLNAACSEQDSEPGARLTCRILLHLFRTPQRNPCPQDGTKSDKSIVGIRSSCDRHLLAASQNSIVVGAVFAVLKAVFMLGDAELKGSGFSHPAGLDDIGEDDMGSKKSGGRNVSIETASLVVYAKYVLKSICHQEWVGERCLKSLSEDSSALQDPVLVNIQAQRLLQLICYPHRQLDSEEGDNPQRQRIKRILQNMDQWTMRQSSLELQLMIKQSSNNELYSLLENIAKATIEVFQKSAEMNSSNPSWNGSAVSGSSVSNSNSASKLKPVLSSSERSGVWLVAPLIGKLPTSVQGHVLKAAGEELEKGQHLGPSSRKERDRQKQKSMSLLSQQPFLSLVLTCLKGQDEQREGLLTSLYSQVQQIVTNWREDQYQDDCKAKQMMHEALKLRLNLVGGMFDTVQRSTQQTTEWAVLLLDIISSGTVDMQSNNELFTTVLDMLSVLINGTLAADMSSISQGSMEENKRAYMNLVKKLRKELGDRQSESLEKVRQLLPLPKQTRDVITCEPQGSLIDTKGNKIAGFEKEGLQVSTKQKISPWDVFEGLKHSAPLSWGWFGTIRVDRKVTKFEEQQRLLLYHTHIKPKQRSYYLAPLNLPQEEEEPLTPVPPEPDKKLDTAKVEKSVSNVPTKKKKKKPASTVKQEDYKPHNTVMQYAPGMTPDLPLSMGQTNMSYRMGYQAPMNMYAQNQPLPPGGPGLEPPFRPRVPMNKMPPRPNYTMPNMQTAGMGNLMGMEKQYQMNYKPMPNMAQGQMLRHQLQGHNHLIGQQIRQVTPNPQYSSMQPAQNIPQGYTSYGSHMGMQPHPSQTPGMVPNSYGNQGFQTGHPATNPTMVDSIRQMQQRPGYVHQQAPAAYGHTIQSTQRFPHQSMQQTPMMHGLAQSHLGVQGIHPNMRPNQMMEQQQQQQQQQQQQQQQQQQVHQQQQHIRQGPVFRPQQQQQVQQQVQQQVQQQQVQQQQVQQQVQPQQVQQQQVQQQQQQQVSAAQPPAQALGMQALPPQQPMFQRQGMQQTQQQQQTAALVRQLQQQLSSTQPAQNNSSYY</sequence>